<gene>
    <name type="primary">ptsN</name>
</gene>
<accession>P33670</accession>
<evidence type="ECO:0000250" key="1"/>
<evidence type="ECO:0000255" key="2">
    <source>
        <dbReference type="PROSITE-ProRule" id="PRU00417"/>
    </source>
</evidence>
<keyword id="KW-0963">Cytoplasm</keyword>
<keyword id="KW-0418">Kinase</keyword>
<keyword id="KW-0808">Transferase</keyword>
<proteinExistence type="inferred from homology"/>
<organism>
    <name type="scientific">Pseudomonas putida</name>
    <name type="common">Arthrobacter siderocapsulatus</name>
    <dbReference type="NCBI Taxonomy" id="303"/>
    <lineage>
        <taxon>Bacteria</taxon>
        <taxon>Pseudomonadati</taxon>
        <taxon>Pseudomonadota</taxon>
        <taxon>Gammaproteobacteria</taxon>
        <taxon>Pseudomonadales</taxon>
        <taxon>Pseudomonadaceae</taxon>
        <taxon>Pseudomonas</taxon>
    </lineage>
</organism>
<reference key="1">
    <citation type="journal article" date="1989" name="Gene">
        <title>Cloning and sequence analysis of the ntrA (rpoN) gene of Pseudomonas putida.</title>
        <authorList>
            <person name="Inouye S."/>
            <person name="Yamada M."/>
            <person name="Nakazawa A."/>
            <person name="Nakazawa T."/>
        </authorList>
    </citation>
    <scope>NUCLEOTIDE SEQUENCE [GENOMIC DNA]</scope>
    <source>
        <strain>TN2100</strain>
    </source>
</reference>
<sequence length="89" mass="9488">MIRLETILTPGRSLVNVPGGSKKRALEKVATVIADQVPELEMQDVFEKLVAREKLGSTGFGNGIAIPHCRLEGSSAPVSALLHLEAPID</sequence>
<protein>
    <recommendedName>
        <fullName>Nitrogen regulatory protein</fullName>
    </recommendedName>
    <alternativeName>
        <fullName>Enzyme IIA-NTR</fullName>
    </alternativeName>
    <domain>
        <recommendedName>
            <fullName>Phosphotransferase enzyme IIA component</fullName>
        </recommendedName>
        <alternativeName>
            <fullName>PTS system EIIA component</fullName>
        </alternativeName>
    </domain>
</protein>
<dbReference type="EMBL" id="M24916">
    <property type="status" value="NOT_ANNOTATED_CDS"/>
    <property type="molecule type" value="Genomic_DNA"/>
</dbReference>
<dbReference type="SMR" id="P33670"/>
<dbReference type="GO" id="GO:0005737">
    <property type="term" value="C:cytoplasm"/>
    <property type="evidence" value="ECO:0007669"/>
    <property type="project" value="UniProtKB-SubCell"/>
</dbReference>
<dbReference type="GO" id="GO:0016301">
    <property type="term" value="F:kinase activity"/>
    <property type="evidence" value="ECO:0007669"/>
    <property type="project" value="UniProtKB-KW"/>
</dbReference>
<dbReference type="GO" id="GO:0030295">
    <property type="term" value="F:protein kinase activator activity"/>
    <property type="evidence" value="ECO:0007669"/>
    <property type="project" value="TreeGrafter"/>
</dbReference>
<dbReference type="Gene3D" id="3.40.930.10">
    <property type="entry name" value="Mannitol-specific EII, Chain A"/>
    <property type="match status" value="1"/>
</dbReference>
<dbReference type="InterPro" id="IPR016152">
    <property type="entry name" value="PTrfase/Anion_transptr"/>
</dbReference>
<dbReference type="InterPro" id="IPR002178">
    <property type="entry name" value="PTS_EIIA_type-2_dom"/>
</dbReference>
<dbReference type="InterPro" id="IPR051541">
    <property type="entry name" value="PTS_SugarTrans_NitroReg"/>
</dbReference>
<dbReference type="PANTHER" id="PTHR47738:SF1">
    <property type="entry name" value="NITROGEN REGULATORY PROTEIN"/>
    <property type="match status" value="1"/>
</dbReference>
<dbReference type="PANTHER" id="PTHR47738">
    <property type="entry name" value="PTS SYSTEM FRUCTOSE-LIKE EIIA COMPONENT-RELATED"/>
    <property type="match status" value="1"/>
</dbReference>
<dbReference type="Pfam" id="PF00359">
    <property type="entry name" value="PTS_EIIA_2"/>
    <property type="match status" value="1"/>
</dbReference>
<dbReference type="SUPFAM" id="SSF55804">
    <property type="entry name" value="Phoshotransferase/anion transport protein"/>
    <property type="match status" value="1"/>
</dbReference>
<dbReference type="PROSITE" id="PS51094">
    <property type="entry name" value="PTS_EIIA_TYPE_2"/>
    <property type="match status" value="1"/>
</dbReference>
<dbReference type="PROSITE" id="PS00372">
    <property type="entry name" value="PTS_EIIA_TYPE_2_HIS"/>
    <property type="match status" value="1"/>
</dbReference>
<name>PTSN_PSEPU</name>
<comment type="function">
    <text evidence="1">Seems to have a role in regulating nitrogen assimilation.</text>
</comment>
<comment type="subcellular location">
    <subcellularLocation>
        <location>Cytoplasm</location>
    </subcellularLocation>
</comment>
<comment type="domain">
    <text>The PTS EIIA type-2 domain may serve a regulatory function, through its phosphorylation activity.</text>
</comment>
<feature type="chain" id="PRO_0000186696" description="Nitrogen regulatory protein">
    <location>
        <begin position="1"/>
        <end position="89" status="greater than"/>
    </location>
</feature>
<feature type="domain" description="PTS EIIA type-2" evidence="2">
    <location>
        <begin position="6"/>
        <end position="89" status="greater than"/>
    </location>
</feature>
<feature type="active site" description="Tele-phosphohistidine intermediate" evidence="2">
    <location>
        <position position="68"/>
    </location>
</feature>
<feature type="non-terminal residue">
    <location>
        <position position="89"/>
    </location>
</feature>